<accession>P14591</accession>
<proteinExistence type="evidence at transcript level"/>
<keyword id="KW-0963">Cytoplasm</keyword>
<keyword id="KW-0417">Keratinization</keyword>
<keyword id="KW-1185">Reference proteome</keyword>
<keyword id="KW-0677">Repeat</keyword>
<name>INVO_PANPA</name>
<dbReference type="EMBL" id="M26514">
    <property type="protein sequence ID" value="AAA35422.1"/>
    <property type="molecule type" value="Genomic_DNA"/>
</dbReference>
<dbReference type="PIR" id="A40125">
    <property type="entry name" value="A40125"/>
</dbReference>
<dbReference type="STRING" id="9597.ENSPPAP00000017228"/>
<dbReference type="eggNOG" id="ENOG502S84Y">
    <property type="taxonomic scope" value="Eukaryota"/>
</dbReference>
<dbReference type="Proteomes" id="UP000240080">
    <property type="component" value="Unplaced"/>
</dbReference>
<dbReference type="GO" id="GO:0001533">
    <property type="term" value="C:cornified envelope"/>
    <property type="evidence" value="ECO:0000250"/>
    <property type="project" value="UniProtKB"/>
</dbReference>
<dbReference type="GO" id="GO:0005737">
    <property type="term" value="C:cytoplasm"/>
    <property type="evidence" value="ECO:0007669"/>
    <property type="project" value="UniProtKB-SubCell"/>
</dbReference>
<dbReference type="GO" id="GO:0031424">
    <property type="term" value="P:keratinization"/>
    <property type="evidence" value="ECO:0007669"/>
    <property type="project" value="UniProtKB-KW"/>
</dbReference>
<dbReference type="GO" id="GO:0030216">
    <property type="term" value="P:keratinocyte differentiation"/>
    <property type="evidence" value="ECO:0000250"/>
    <property type="project" value="UniProtKB"/>
</dbReference>
<dbReference type="GO" id="GO:0018149">
    <property type="term" value="P:peptide cross-linking"/>
    <property type="evidence" value="ECO:0000250"/>
    <property type="project" value="UniProtKB"/>
</dbReference>
<dbReference type="GO" id="GO:0010224">
    <property type="term" value="P:response to UV-B"/>
    <property type="evidence" value="ECO:0000250"/>
    <property type="project" value="UniProtKB"/>
</dbReference>
<dbReference type="FunFam" id="3.80.10.10:FF:002891">
    <property type="entry name" value="Involucrin"/>
    <property type="match status" value="1"/>
</dbReference>
<dbReference type="Gene3D" id="3.80.10.10">
    <property type="entry name" value="Ribonuclease Inhibitor"/>
    <property type="match status" value="1"/>
</dbReference>
<dbReference type="InterPro" id="IPR019743">
    <property type="entry name" value="Involucrin_CS"/>
</dbReference>
<dbReference type="InterPro" id="IPR019571">
    <property type="entry name" value="Involucrin_N"/>
</dbReference>
<dbReference type="InterPro" id="IPR000354">
    <property type="entry name" value="Involucrin_rpt"/>
</dbReference>
<dbReference type="InterPro" id="IPR032675">
    <property type="entry name" value="LRR_dom_sf"/>
</dbReference>
<dbReference type="Pfam" id="PF00904">
    <property type="entry name" value="Involucrin"/>
    <property type="match status" value="24"/>
</dbReference>
<dbReference type="Pfam" id="PF10583">
    <property type="entry name" value="Involucrin_N"/>
    <property type="match status" value="1"/>
</dbReference>
<dbReference type="PROSITE" id="PS00795">
    <property type="entry name" value="INVOLUCRIN"/>
    <property type="match status" value="1"/>
</dbReference>
<reference key="1">
    <citation type="journal article" date="1989" name="Proc. Natl. Acad. Sci. U.S.A.">
        <title>Vectorial expansion of the involucrin gene and the relatedness of the hominoids.</title>
        <authorList>
            <person name="Djian P."/>
            <person name="Green H."/>
        </authorList>
    </citation>
    <scope>NUCLEOTIDE SEQUENCE [GENOMIC DNA]</scope>
</reference>
<sequence length="560" mass="65478">MSQQHTLPVTLSPALSQELLKTVPPPVNTQQEQMKQPTPLPPPCQKMPVELPVEVPSKQEEKHMTAVKGLPEQECEQQQQEPQEQELQQQHWEQHEEYQKAENPEQQLKQEKAQRDPQLNKQLEEEKKLLDQQLDQELVKRDEQLGMKKEQLLELPEQQEGHLKHLEQREGQLELPEQQEGQLKHLEQQKGQLELPEQQEGQLELPEQQEGQLKHLEQQEGQLKHLEHQEGQLEVPEEQVGQLKYLEQQEGQLKHLDQQEKQPELPEQQVGQLKHLEQQEGQPKHLEQQKGQLEHLEEQEGQLKHLEQQEGQLEHLEHQEGQLGLPEQQVQQLKQLEKEEGQPKHLEEEEGQLKHLVQQEGQLEHLVQQEGQLEHLVQQEGQLEQQEGQVEHLEQQVEHLEQLGQLKHLEEQEGQLKHLEQQQGQLGVPEQVGQPKNLEQEEKQLELPEQQEGQLKHLEKQEAQLELPEQQVGQPKHLEQQEKQLEPPEQQDGQLKHLEQQEGQLKDLEQQKGQLEQPVFAPAPGQVQDIQSALPTKGEVLLPLEHQQQKQEVQWPPKHK</sequence>
<evidence type="ECO:0000250" key="1"/>
<evidence type="ECO:0000256" key="2">
    <source>
        <dbReference type="SAM" id="MobiDB-lite"/>
    </source>
</evidence>
<evidence type="ECO:0000305" key="3"/>
<protein>
    <recommendedName>
        <fullName>Involucrin</fullName>
    </recommendedName>
</protein>
<gene>
    <name type="primary">IVL</name>
</gene>
<comment type="function">
    <text>Part of the insoluble cornified cell envelope (CE) of stratified squamous epithelia.</text>
</comment>
<comment type="subunit">
    <text evidence="1">Directly or indirectly cross-linked to cornifelin (CNFN).</text>
</comment>
<comment type="subcellular location">
    <subcellularLocation>
        <location>Cytoplasm</location>
    </subcellularLocation>
    <text>Constituent of the scaffolding of the cornified envelope.</text>
</comment>
<comment type="tissue specificity">
    <text>Keratinocytes of epidermis and other stratified squamous epithelia.</text>
</comment>
<comment type="PTM">
    <text>Substrate of transglutaminase. Specific glutamines or lysines are cross-linked to keratins, desmoplakin and to inter involucrin molecules.</text>
</comment>
<comment type="similarity">
    <text evidence="3">Belongs to the involucrin family.</text>
</comment>
<feature type="chain" id="PRO_0000159740" description="Involucrin">
    <location>
        <begin position="1"/>
        <end position="560"/>
    </location>
</feature>
<feature type="region of interest" description="Disordered" evidence="2">
    <location>
        <begin position="1"/>
        <end position="131"/>
    </location>
</feature>
<feature type="region of interest" description="Disordered" evidence="2">
    <location>
        <begin position="150"/>
        <end position="359"/>
    </location>
</feature>
<feature type="region of interest" description="Disordered" evidence="2">
    <location>
        <begin position="404"/>
        <end position="534"/>
    </location>
</feature>
<feature type="compositionally biased region" description="Polar residues" evidence="2">
    <location>
        <begin position="1"/>
        <end position="15"/>
    </location>
</feature>
<feature type="compositionally biased region" description="Low complexity" evidence="2">
    <location>
        <begin position="76"/>
        <end position="91"/>
    </location>
</feature>
<feature type="compositionally biased region" description="Basic and acidic residues" evidence="2">
    <location>
        <begin position="92"/>
        <end position="115"/>
    </location>
</feature>
<feature type="compositionally biased region" description="Basic and acidic residues" evidence="2">
    <location>
        <begin position="159"/>
        <end position="172"/>
    </location>
</feature>
<feature type="compositionally biased region" description="Low complexity" evidence="2">
    <location>
        <begin position="189"/>
        <end position="211"/>
    </location>
</feature>
<feature type="compositionally biased region" description="Basic and acidic residues" evidence="2">
    <location>
        <begin position="212"/>
        <end position="231"/>
    </location>
</feature>
<feature type="compositionally biased region" description="Basic and acidic residues" evidence="2">
    <location>
        <begin position="252"/>
        <end position="264"/>
    </location>
</feature>
<feature type="compositionally biased region" description="Basic and acidic residues" evidence="2">
    <location>
        <begin position="274"/>
        <end position="320"/>
    </location>
</feature>
<feature type="compositionally biased region" description="Low complexity" evidence="2">
    <location>
        <begin position="321"/>
        <end position="334"/>
    </location>
</feature>
<feature type="compositionally biased region" description="Basic and acidic residues" evidence="2">
    <location>
        <begin position="335"/>
        <end position="353"/>
    </location>
</feature>
<feature type="compositionally biased region" description="Basic and acidic residues" evidence="2">
    <location>
        <begin position="404"/>
        <end position="420"/>
    </location>
</feature>
<feature type="compositionally biased region" description="Basic and acidic residues" evidence="2">
    <location>
        <begin position="454"/>
        <end position="463"/>
    </location>
</feature>
<feature type="compositionally biased region" description="Basic and acidic residues" evidence="2">
    <location>
        <begin position="476"/>
        <end position="486"/>
    </location>
</feature>
<feature type="compositionally biased region" description="Basic and acidic residues" evidence="2">
    <location>
        <begin position="494"/>
        <end position="510"/>
    </location>
</feature>
<organism>
    <name type="scientific">Pan paniscus</name>
    <name type="common">Pygmy chimpanzee</name>
    <name type="synonym">Bonobo</name>
    <dbReference type="NCBI Taxonomy" id="9597"/>
    <lineage>
        <taxon>Eukaryota</taxon>
        <taxon>Metazoa</taxon>
        <taxon>Chordata</taxon>
        <taxon>Craniata</taxon>
        <taxon>Vertebrata</taxon>
        <taxon>Euteleostomi</taxon>
        <taxon>Mammalia</taxon>
        <taxon>Eutheria</taxon>
        <taxon>Euarchontoglires</taxon>
        <taxon>Primates</taxon>
        <taxon>Haplorrhini</taxon>
        <taxon>Catarrhini</taxon>
        <taxon>Hominidae</taxon>
        <taxon>Pan</taxon>
    </lineage>
</organism>